<dbReference type="EMBL" id="FM180568">
    <property type="protein sequence ID" value="CAS11095.1"/>
    <property type="molecule type" value="Genomic_DNA"/>
</dbReference>
<dbReference type="RefSeq" id="WP_000460672.1">
    <property type="nucleotide sequence ID" value="NC_011601.1"/>
</dbReference>
<dbReference type="SMR" id="B7UK08"/>
<dbReference type="GeneID" id="86948148"/>
<dbReference type="KEGG" id="ecg:E2348C_3547"/>
<dbReference type="HOGENOM" id="CLU_133242_0_0_6"/>
<dbReference type="Proteomes" id="UP000008205">
    <property type="component" value="Chromosome"/>
</dbReference>
<dbReference type="HAMAP" id="MF_00598">
    <property type="entry name" value="Smg"/>
    <property type="match status" value="1"/>
</dbReference>
<dbReference type="InterPro" id="IPR007456">
    <property type="entry name" value="Smg"/>
</dbReference>
<dbReference type="NCBIfam" id="NF002897">
    <property type="entry name" value="PRK03430.1"/>
    <property type="match status" value="1"/>
</dbReference>
<dbReference type="PANTHER" id="PTHR38692">
    <property type="entry name" value="PROTEIN SMG"/>
    <property type="match status" value="1"/>
</dbReference>
<dbReference type="PANTHER" id="PTHR38692:SF1">
    <property type="entry name" value="PROTEIN SMG"/>
    <property type="match status" value="1"/>
</dbReference>
<dbReference type="Pfam" id="PF04361">
    <property type="entry name" value="DUF494"/>
    <property type="match status" value="1"/>
</dbReference>
<feature type="chain" id="PRO_1000146994" description="Protein Smg">
    <location>
        <begin position="1"/>
        <end position="157"/>
    </location>
</feature>
<name>SMG_ECO27</name>
<comment type="similarity">
    <text evidence="1">Belongs to the Smg family.</text>
</comment>
<sequence>MFDVLMYLFETYIHTEAELRVDQDKLEQDLTDAGFDREDIYNALLWLEKLADYQEGLAEPMQLASDPLSMRIYTPEECERLDASCRGFLLFLEQIQVLNLETREMVIERVLALDTAEFDLEDLKWVILMVLFNIPGCENAYQQMEELLFEVNEGMLH</sequence>
<accession>B7UK08</accession>
<evidence type="ECO:0000255" key="1">
    <source>
        <dbReference type="HAMAP-Rule" id="MF_00598"/>
    </source>
</evidence>
<proteinExistence type="inferred from homology"/>
<keyword id="KW-1185">Reference proteome</keyword>
<protein>
    <recommendedName>
        <fullName evidence="1">Protein Smg</fullName>
    </recommendedName>
</protein>
<reference key="1">
    <citation type="journal article" date="2009" name="J. Bacteriol.">
        <title>Complete genome sequence and comparative genome analysis of enteropathogenic Escherichia coli O127:H6 strain E2348/69.</title>
        <authorList>
            <person name="Iguchi A."/>
            <person name="Thomson N.R."/>
            <person name="Ogura Y."/>
            <person name="Saunders D."/>
            <person name="Ooka T."/>
            <person name="Henderson I.R."/>
            <person name="Harris D."/>
            <person name="Asadulghani M."/>
            <person name="Kurokawa K."/>
            <person name="Dean P."/>
            <person name="Kenny B."/>
            <person name="Quail M.A."/>
            <person name="Thurston S."/>
            <person name="Dougan G."/>
            <person name="Hayashi T."/>
            <person name="Parkhill J."/>
            <person name="Frankel G."/>
        </authorList>
    </citation>
    <scope>NUCLEOTIDE SEQUENCE [LARGE SCALE GENOMIC DNA]</scope>
    <source>
        <strain>E2348/69 / EPEC</strain>
    </source>
</reference>
<gene>
    <name evidence="1" type="primary">smg</name>
    <name type="ordered locus">E2348C_3547</name>
</gene>
<organism>
    <name type="scientific">Escherichia coli O127:H6 (strain E2348/69 / EPEC)</name>
    <dbReference type="NCBI Taxonomy" id="574521"/>
    <lineage>
        <taxon>Bacteria</taxon>
        <taxon>Pseudomonadati</taxon>
        <taxon>Pseudomonadota</taxon>
        <taxon>Gammaproteobacteria</taxon>
        <taxon>Enterobacterales</taxon>
        <taxon>Enterobacteriaceae</taxon>
        <taxon>Escherichia</taxon>
    </lineage>
</organism>